<organism>
    <name type="scientific">Synechococcus sp. (strain ATCC 27144 / PCC 6301 / SAUG 1402/1)</name>
    <name type="common">Anacystis nidulans</name>
    <dbReference type="NCBI Taxonomy" id="269084"/>
    <lineage>
        <taxon>Bacteria</taxon>
        <taxon>Bacillati</taxon>
        <taxon>Cyanobacteriota</taxon>
        <taxon>Cyanophyceae</taxon>
        <taxon>Synechococcales</taxon>
        <taxon>Synechococcaceae</taxon>
        <taxon>Synechococcus</taxon>
    </lineage>
</organism>
<protein>
    <recommendedName>
        <fullName evidence="1">Catalase-peroxidase</fullName>
        <shortName evidence="1">CP</shortName>
        <ecNumber evidence="1">1.11.1.21</ecNumber>
    </recommendedName>
    <alternativeName>
        <fullName evidence="1">Peroxidase/catalase</fullName>
    </alternativeName>
</protein>
<accession>Q5MZ99</accession>
<accession>Q9R6S9</accession>
<dbReference type="EC" id="1.11.1.21" evidence="1"/>
<dbReference type="EMBL" id="AF197161">
    <property type="protein sequence ID" value="AAF05841.1"/>
    <property type="molecule type" value="Genomic_DNA"/>
</dbReference>
<dbReference type="EMBL" id="AP008231">
    <property type="protein sequence ID" value="BAD80621.1"/>
    <property type="molecule type" value="Genomic_DNA"/>
</dbReference>
<dbReference type="RefSeq" id="WP_011244741.1">
    <property type="nucleotide sequence ID" value="NZ_CP085785.1"/>
</dbReference>
<dbReference type="SMR" id="Q5MZ99"/>
<dbReference type="PeroxiBase" id="3578">
    <property type="entry name" value="SeCP01_PCC6301"/>
</dbReference>
<dbReference type="GeneID" id="72430526"/>
<dbReference type="KEGG" id="syc:syc2431_d"/>
<dbReference type="eggNOG" id="COG0376">
    <property type="taxonomic scope" value="Bacteria"/>
</dbReference>
<dbReference type="Proteomes" id="UP000001175">
    <property type="component" value="Chromosome"/>
</dbReference>
<dbReference type="GO" id="GO:0005829">
    <property type="term" value="C:cytosol"/>
    <property type="evidence" value="ECO:0007669"/>
    <property type="project" value="UniProtKB-SubCell"/>
</dbReference>
<dbReference type="GO" id="GO:0004096">
    <property type="term" value="F:catalase activity"/>
    <property type="evidence" value="ECO:0007669"/>
    <property type="project" value="UniProtKB-UniRule"/>
</dbReference>
<dbReference type="GO" id="GO:0020037">
    <property type="term" value="F:heme binding"/>
    <property type="evidence" value="ECO:0007669"/>
    <property type="project" value="InterPro"/>
</dbReference>
<dbReference type="GO" id="GO:0046872">
    <property type="term" value="F:metal ion binding"/>
    <property type="evidence" value="ECO:0007669"/>
    <property type="project" value="UniProtKB-KW"/>
</dbReference>
<dbReference type="GO" id="GO:0070301">
    <property type="term" value="P:cellular response to hydrogen peroxide"/>
    <property type="evidence" value="ECO:0007669"/>
    <property type="project" value="TreeGrafter"/>
</dbReference>
<dbReference type="GO" id="GO:0042744">
    <property type="term" value="P:hydrogen peroxide catabolic process"/>
    <property type="evidence" value="ECO:0007669"/>
    <property type="project" value="UniProtKB-KW"/>
</dbReference>
<dbReference type="CDD" id="cd00649">
    <property type="entry name" value="catalase_peroxidase_1"/>
    <property type="match status" value="1"/>
</dbReference>
<dbReference type="CDD" id="cd08200">
    <property type="entry name" value="catalase_peroxidase_2"/>
    <property type="match status" value="1"/>
</dbReference>
<dbReference type="FunFam" id="1.10.420.10:FF:000002">
    <property type="entry name" value="Catalase-peroxidase"/>
    <property type="match status" value="1"/>
</dbReference>
<dbReference type="FunFam" id="1.10.420.10:FF:000004">
    <property type="entry name" value="Catalase-peroxidase"/>
    <property type="match status" value="1"/>
</dbReference>
<dbReference type="FunFam" id="1.10.520.10:FF:000002">
    <property type="entry name" value="Catalase-peroxidase"/>
    <property type="match status" value="1"/>
</dbReference>
<dbReference type="Gene3D" id="1.10.520.10">
    <property type="match status" value="2"/>
</dbReference>
<dbReference type="Gene3D" id="1.10.420.10">
    <property type="entry name" value="Peroxidase, domain 2"/>
    <property type="match status" value="2"/>
</dbReference>
<dbReference type="HAMAP" id="MF_01961">
    <property type="entry name" value="Catal_peroxid"/>
    <property type="match status" value="1"/>
</dbReference>
<dbReference type="InterPro" id="IPR000763">
    <property type="entry name" value="Catalase_peroxidase"/>
</dbReference>
<dbReference type="InterPro" id="IPR002016">
    <property type="entry name" value="Haem_peroxidase"/>
</dbReference>
<dbReference type="InterPro" id="IPR010255">
    <property type="entry name" value="Haem_peroxidase_sf"/>
</dbReference>
<dbReference type="InterPro" id="IPR019794">
    <property type="entry name" value="Peroxidases_AS"/>
</dbReference>
<dbReference type="NCBIfam" id="TIGR00198">
    <property type="entry name" value="cat_per_HPI"/>
    <property type="match status" value="1"/>
</dbReference>
<dbReference type="NCBIfam" id="NF011635">
    <property type="entry name" value="PRK15061.1"/>
    <property type="match status" value="1"/>
</dbReference>
<dbReference type="PANTHER" id="PTHR30555:SF6">
    <property type="entry name" value="CATALASE-PEROXIDASE"/>
    <property type="match status" value="1"/>
</dbReference>
<dbReference type="PANTHER" id="PTHR30555">
    <property type="entry name" value="HYDROPEROXIDASE I, BIFUNCTIONAL CATALASE-PEROXIDASE"/>
    <property type="match status" value="1"/>
</dbReference>
<dbReference type="Pfam" id="PF00141">
    <property type="entry name" value="peroxidase"/>
    <property type="match status" value="2"/>
</dbReference>
<dbReference type="PRINTS" id="PR00460">
    <property type="entry name" value="BPEROXIDASE"/>
</dbReference>
<dbReference type="PRINTS" id="PR00458">
    <property type="entry name" value="PEROXIDASE"/>
</dbReference>
<dbReference type="SUPFAM" id="SSF48113">
    <property type="entry name" value="Heme-dependent peroxidases"/>
    <property type="match status" value="2"/>
</dbReference>
<dbReference type="PROSITE" id="PS00436">
    <property type="entry name" value="PEROXIDASE_2"/>
    <property type="match status" value="1"/>
</dbReference>
<dbReference type="PROSITE" id="PS50873">
    <property type="entry name" value="PEROXIDASE_4"/>
    <property type="match status" value="2"/>
</dbReference>
<reference key="1">
    <citation type="journal article" date="2000" name="Biochimie">
        <title>Nucleotide sequence analysis, overexpression in Escherichia coli and kinetic characterization of Anacystis nidulans catalase-peroxidase.</title>
        <authorList>
            <person name="Engleder M."/>
            <person name="Regelsberger G."/>
            <person name="Jakopitsch C."/>
            <person name="Furtmueller P.G."/>
            <person name="Rueker F."/>
            <person name="Peschek G.A."/>
            <person name="Obinger C."/>
        </authorList>
    </citation>
    <scope>NUCLEOTIDE SEQUENCE [GENOMIC DNA]</scope>
    <scope>FUNCTION</scope>
    <scope>SUBUNIT</scope>
    <scope>HEME-BINDING</scope>
    <scope>ACTIVITY REGULATION</scope>
</reference>
<reference key="2">
    <citation type="journal article" date="2007" name="Photosyn. Res.">
        <title>Complete nucleotide sequence of the freshwater unicellular cyanobacterium Synechococcus elongatus PCC 6301 chromosome: gene content and organization.</title>
        <authorList>
            <person name="Sugita C."/>
            <person name="Ogata K."/>
            <person name="Shikata M."/>
            <person name="Jikuya H."/>
            <person name="Takano J."/>
            <person name="Furumichi M."/>
            <person name="Kanehisa M."/>
            <person name="Omata T."/>
            <person name="Sugiura M."/>
            <person name="Sugita M."/>
        </authorList>
    </citation>
    <scope>NUCLEOTIDE SEQUENCE [LARGE SCALE GENOMIC DNA]</scope>
    <source>
        <strain>ATCC 27144 / PCC 6301 / SAUG 1402/1</strain>
    </source>
</reference>
<reference key="3">
    <citation type="journal article" date="1997" name="Biochem. Biophys. Res. Commun.">
        <title>Purification and characterization of a homodimeric catalase-peroxidase from the cyanobacterium Anacystis nidulans.</title>
        <authorList>
            <person name="Obinger C."/>
            <person name="Regelsberger G."/>
            <person name="Strasser G."/>
            <person name="Burner U."/>
            <person name="Peschek G.A."/>
        </authorList>
    </citation>
    <scope>FUNCTION</scope>
    <scope>BIOPHYSICOCHEMICAL PROPERTIES</scope>
    <scope>SUBUNIT</scope>
    <scope>SUBCELLULAR LOCATION</scope>
</reference>
<feature type="chain" id="PRO_0000354941" description="Catalase-peroxidase">
    <location>
        <begin position="1"/>
        <end position="720"/>
    </location>
</feature>
<feature type="active site" description="Proton acceptor" evidence="1">
    <location>
        <position position="95"/>
    </location>
</feature>
<feature type="binding site" description="axial binding residue" evidence="1">
    <location>
        <position position="263"/>
    </location>
    <ligand>
        <name>heme b</name>
        <dbReference type="ChEBI" id="CHEBI:60344"/>
    </ligand>
    <ligandPart>
        <name>Fe</name>
        <dbReference type="ChEBI" id="CHEBI:18248"/>
    </ligandPart>
</feature>
<feature type="site" description="Transition state stabilizer" evidence="1">
    <location>
        <position position="91"/>
    </location>
</feature>
<feature type="cross-link" description="Tryptophyl-tyrosyl-methioninium (Trp-Tyr) (with M-248)" evidence="1">
    <location>
        <begin position="94"/>
        <end position="222"/>
    </location>
</feature>
<feature type="cross-link" description="Tryptophyl-tyrosyl-methioninium (Tyr-Met) (with W-94)" evidence="1">
    <location>
        <begin position="222"/>
        <end position="248"/>
    </location>
</feature>
<feature type="sequence conflict" description="In Ref. 1; AAF05841." evidence="4" ref="1">
    <original>Q</original>
    <variation>R</variation>
    <location>
        <position position="5"/>
    </location>
</feature>
<feature type="sequence conflict" description="In Ref. 1; AAF05841." evidence="4" ref="1">
    <original>V</original>
    <variation>I</variation>
    <location>
        <position position="358"/>
    </location>
</feature>
<name>KATG_SYNP6</name>
<keyword id="KW-0963">Cytoplasm</keyword>
<keyword id="KW-0349">Heme</keyword>
<keyword id="KW-0376">Hydrogen peroxide</keyword>
<keyword id="KW-0408">Iron</keyword>
<keyword id="KW-0479">Metal-binding</keyword>
<keyword id="KW-0560">Oxidoreductase</keyword>
<keyword id="KW-0575">Peroxidase</keyword>
<evidence type="ECO:0000255" key="1">
    <source>
        <dbReference type="HAMAP-Rule" id="MF_01961"/>
    </source>
</evidence>
<evidence type="ECO:0000269" key="2">
    <source>
    </source>
</evidence>
<evidence type="ECO:0000269" key="3">
    <source>
    </source>
</evidence>
<evidence type="ECO:0000305" key="4"/>
<gene>
    <name evidence="1" type="primary">katG</name>
    <name type="ordered locus">syc2431_d</name>
</gene>
<comment type="function">
    <text evidence="1 2 3">Bifunctional enzyme with both catalase and broad-spectrum peroxidase activity.</text>
</comment>
<comment type="catalytic activity">
    <reaction evidence="1">
        <text>H2O2 + AH2 = A + 2 H2O</text>
        <dbReference type="Rhea" id="RHEA:30275"/>
        <dbReference type="ChEBI" id="CHEBI:13193"/>
        <dbReference type="ChEBI" id="CHEBI:15377"/>
        <dbReference type="ChEBI" id="CHEBI:16240"/>
        <dbReference type="ChEBI" id="CHEBI:17499"/>
        <dbReference type="EC" id="1.11.1.21"/>
    </reaction>
</comment>
<comment type="catalytic activity">
    <reaction evidence="1">
        <text>2 H2O2 = O2 + 2 H2O</text>
        <dbReference type="Rhea" id="RHEA:20309"/>
        <dbReference type="ChEBI" id="CHEBI:15377"/>
        <dbReference type="ChEBI" id="CHEBI:15379"/>
        <dbReference type="ChEBI" id="CHEBI:16240"/>
        <dbReference type="EC" id="1.11.1.21"/>
    </reaction>
</comment>
<comment type="cofactor">
    <cofactor>
        <name>heme b</name>
        <dbReference type="ChEBI" id="CHEBI:60344"/>
    </cofactor>
    <text>Binds 1 heme b (iron(II)-protoporphyrin IX) group per dimer.</text>
</comment>
<comment type="activity regulation">
    <text evidence="2">Inhibited by cyanide.</text>
</comment>
<comment type="biophysicochemical properties">
    <kinetics>
        <KM evidence="3">4.3 mM for H(2)O(2) for the catalase reaction</KM>
    </kinetics>
    <phDependence>
        <text evidence="3">Optimum pH is 6.5-7.5 for both the catalase and the peroxidase reaction.</text>
    </phDependence>
</comment>
<comment type="subunit">
    <text evidence="2 3">Homodimer.</text>
</comment>
<comment type="subcellular location">
    <subcellularLocation>
        <location evidence="3">Cytoplasm</location>
        <location evidence="3">Cytosol</location>
    </subcellularLocation>
</comment>
<comment type="PTM">
    <text evidence="1">Formation of the three residue Trp-Tyr-Met cross-link is important for the catalase, but not the peroxidase activity of the enzyme.</text>
</comment>
<comment type="similarity">
    <text evidence="1">Belongs to the peroxidase family. Peroxidase/catalase subfamily.</text>
</comment>
<proteinExistence type="evidence at protein level"/>
<sequence>MTATQGKCPVMHGGATTVNISTAEWWPKALNLDILSQHDRKTNPMGPDFNYQEEVKKLDVAALKQDLQALMTDSQDWWPADWGHYGGLMIRLTWHAAGTYRIADGRGGAGTGNQRFAPLNSWPDNTNLDKARRLLWPIKQKYGNKLSWADLIAYAGTIAYESMGLKTFGFAFGREDIWHPEKDIYWGPEKEWVPPSTNPNSRYTGDRELENPLAAVTMGLIYVNPEGVDGNPDPLKTAHDVRVTFARMAMNDEETVALTAGGHTVGKCHGNGNAALLGPEPEGADVEDQGLGWINKTQSGIGRNAVTSGLEGAWTPHPTQWDNGYFRMLLNYDWELKKSPAGAWQWEPINPREEDLPVDVEDPSIRRNLVMTDADMAMKMDPEYRKISERFYQDPAYFADVFARAWFKLTHRDMGPKARYIGPDVPQEDLIWQDPIPAGNRNYDVQAVKDRIAASGLSISELVSTAWDSARTYRNSDKRGGANGARIRLAPQKDWEGNEPDRLAKVLAVLEGIAAATGASVADVIVLAGNVGVEQAARAAGVEIVLPFAPGRGDATAEQTDTESFAVLEPIHDGYRNWLKQDYAATPEELLLDRTQLLGLTAPEMTVLIGGLRVLGTNHGGTKHGVFTDREGVLTNDFFVNLTDMNYLWKPAGKNLYEICDRKTNQVKWTATRVDLVFGSNSILRAYSELYAQDDNKEKFVRDFVAAWTKVMNADRFDLD</sequence>